<comment type="function">
    <text evidence="1">Binds the 23S rRNA.</text>
</comment>
<comment type="subunit">
    <text evidence="1">Part of the 50S ribosomal subunit.</text>
</comment>
<comment type="similarity">
    <text evidence="2">Belongs to the bacterial ribosomal protein bL31 family. Type A subfamily.</text>
</comment>
<proteinExistence type="inferred from homology"/>
<reference key="1">
    <citation type="journal article" date="2005" name="J. Bacteriol.">
        <title>Swine and poultry pathogens: the complete genome sequences of two strains of Mycoplasma hyopneumoniae and a strain of Mycoplasma synoviae.</title>
        <authorList>
            <person name="Vasconcelos A.T.R."/>
            <person name="Ferreira H.B."/>
            <person name="Bizarro C.V."/>
            <person name="Bonatto S.L."/>
            <person name="Carvalho M.O."/>
            <person name="Pinto P.M."/>
            <person name="Almeida D.F."/>
            <person name="Almeida L.G.P."/>
            <person name="Almeida R."/>
            <person name="Alves-Junior L."/>
            <person name="Assuncao E.N."/>
            <person name="Azevedo V.A.C."/>
            <person name="Bogo M.R."/>
            <person name="Brigido M.M."/>
            <person name="Brocchi M."/>
            <person name="Burity H.A."/>
            <person name="Camargo A.A."/>
            <person name="Camargo S.S."/>
            <person name="Carepo M.S."/>
            <person name="Carraro D.M."/>
            <person name="de Mattos Cascardo J.C."/>
            <person name="Castro L.A."/>
            <person name="Cavalcanti G."/>
            <person name="Chemale G."/>
            <person name="Collevatti R.G."/>
            <person name="Cunha C.W."/>
            <person name="Dallagiovanna B."/>
            <person name="Dambros B.P."/>
            <person name="Dellagostin O.A."/>
            <person name="Falcao C."/>
            <person name="Fantinatti-Garboggini F."/>
            <person name="Felipe M.S.S."/>
            <person name="Fiorentin L."/>
            <person name="Franco G.R."/>
            <person name="Freitas N.S.A."/>
            <person name="Frias D."/>
            <person name="Grangeiro T.B."/>
            <person name="Grisard E.C."/>
            <person name="Guimaraes C.T."/>
            <person name="Hungria M."/>
            <person name="Jardim S.N."/>
            <person name="Krieger M.A."/>
            <person name="Laurino J.P."/>
            <person name="Lima L.F.A."/>
            <person name="Lopes M.I."/>
            <person name="Loreto E.L.S."/>
            <person name="Madeira H.M.F."/>
            <person name="Manfio G.P."/>
            <person name="Maranhao A.Q."/>
            <person name="Martinkovics C.T."/>
            <person name="Medeiros S.R.B."/>
            <person name="Moreira M.A.M."/>
            <person name="Neiva M."/>
            <person name="Ramalho-Neto C.E."/>
            <person name="Nicolas M.F."/>
            <person name="Oliveira S.C."/>
            <person name="Paixao R.F.C."/>
            <person name="Pedrosa F.O."/>
            <person name="Pena S.D.J."/>
            <person name="Pereira M."/>
            <person name="Pereira-Ferrari L."/>
            <person name="Piffer I."/>
            <person name="Pinto L.S."/>
            <person name="Potrich D.P."/>
            <person name="Salim A.C.M."/>
            <person name="Santos F.R."/>
            <person name="Schmitt R."/>
            <person name="Schneider M.P.C."/>
            <person name="Schrank A."/>
            <person name="Schrank I.S."/>
            <person name="Schuck A.F."/>
            <person name="Seuanez H.N."/>
            <person name="Silva D.W."/>
            <person name="Silva R."/>
            <person name="Silva S.C."/>
            <person name="Soares C.M.A."/>
            <person name="Souza K.R.L."/>
            <person name="Souza R.C."/>
            <person name="Staats C.C."/>
            <person name="Steffens M.B.R."/>
            <person name="Teixeira S.M.R."/>
            <person name="Urmenyi T.P."/>
            <person name="Vainstein M.H."/>
            <person name="Zuccherato L.W."/>
            <person name="Simpson A.J.G."/>
            <person name="Zaha A."/>
        </authorList>
    </citation>
    <scope>NUCLEOTIDE SEQUENCE [LARGE SCALE GENOMIC DNA]</scope>
    <source>
        <strain>53</strain>
    </source>
</reference>
<feature type="chain" id="PRO_0000259197" description="Large ribosomal subunit protein bL31">
    <location>
        <begin position="1"/>
        <end position="71"/>
    </location>
</feature>
<organism>
    <name type="scientific">Mycoplasmopsis synoviae (strain 53)</name>
    <name type="common">Mycoplasma synoviae</name>
    <dbReference type="NCBI Taxonomy" id="262723"/>
    <lineage>
        <taxon>Bacteria</taxon>
        <taxon>Bacillati</taxon>
        <taxon>Mycoplasmatota</taxon>
        <taxon>Mycoplasmoidales</taxon>
        <taxon>Metamycoplasmataceae</taxon>
        <taxon>Mycoplasmopsis</taxon>
    </lineage>
</organism>
<sequence length="71" mass="8303">MKKDLHPQYYSVAVKCETCKNEFTLKSTKKEFKIDVCSKCHPVYTGNRSQAKSTGMIEKFNRRLAKKDQQK</sequence>
<name>RL31_MYCS5</name>
<gene>
    <name type="primary">rpmE</name>
    <name type="ordered locus">MS53_0477</name>
</gene>
<protein>
    <recommendedName>
        <fullName evidence="2">Large ribosomal subunit protein bL31</fullName>
    </recommendedName>
    <alternativeName>
        <fullName>50S ribosomal protein L31</fullName>
    </alternativeName>
</protein>
<keyword id="KW-1185">Reference proteome</keyword>
<keyword id="KW-0687">Ribonucleoprotein</keyword>
<keyword id="KW-0689">Ribosomal protein</keyword>
<keyword id="KW-0694">RNA-binding</keyword>
<keyword id="KW-0699">rRNA-binding</keyword>
<evidence type="ECO:0000250" key="1"/>
<evidence type="ECO:0000305" key="2"/>
<accession>Q4A5T5</accession>
<dbReference type="EMBL" id="AE017245">
    <property type="protein sequence ID" value="AAZ43886.1"/>
    <property type="molecule type" value="Genomic_DNA"/>
</dbReference>
<dbReference type="RefSeq" id="WP_011283615.1">
    <property type="nucleotide sequence ID" value="NC_007294.1"/>
</dbReference>
<dbReference type="STRING" id="262723.MS53_0477"/>
<dbReference type="GeneID" id="93530259"/>
<dbReference type="KEGG" id="msy:MS53_0477"/>
<dbReference type="eggNOG" id="COG0254">
    <property type="taxonomic scope" value="Bacteria"/>
</dbReference>
<dbReference type="HOGENOM" id="CLU_114306_4_3_14"/>
<dbReference type="OrthoDB" id="9803251at2"/>
<dbReference type="Proteomes" id="UP000000549">
    <property type="component" value="Chromosome"/>
</dbReference>
<dbReference type="GO" id="GO:1990904">
    <property type="term" value="C:ribonucleoprotein complex"/>
    <property type="evidence" value="ECO:0007669"/>
    <property type="project" value="UniProtKB-KW"/>
</dbReference>
<dbReference type="GO" id="GO:0005840">
    <property type="term" value="C:ribosome"/>
    <property type="evidence" value="ECO:0007669"/>
    <property type="project" value="UniProtKB-KW"/>
</dbReference>
<dbReference type="GO" id="GO:0019843">
    <property type="term" value="F:rRNA binding"/>
    <property type="evidence" value="ECO:0007669"/>
    <property type="project" value="UniProtKB-KW"/>
</dbReference>
<dbReference type="GO" id="GO:0003735">
    <property type="term" value="F:structural constituent of ribosome"/>
    <property type="evidence" value="ECO:0007669"/>
    <property type="project" value="InterPro"/>
</dbReference>
<dbReference type="GO" id="GO:0006412">
    <property type="term" value="P:translation"/>
    <property type="evidence" value="ECO:0007669"/>
    <property type="project" value="InterPro"/>
</dbReference>
<dbReference type="Gene3D" id="4.10.830.30">
    <property type="entry name" value="Ribosomal protein L31"/>
    <property type="match status" value="1"/>
</dbReference>
<dbReference type="InterPro" id="IPR034704">
    <property type="entry name" value="Ribosomal_bL28/bL31-like_sf"/>
</dbReference>
<dbReference type="InterPro" id="IPR002150">
    <property type="entry name" value="Ribosomal_bL31"/>
</dbReference>
<dbReference type="InterPro" id="IPR042105">
    <property type="entry name" value="Ribosomal_bL31_sf"/>
</dbReference>
<dbReference type="NCBIfam" id="TIGR00105">
    <property type="entry name" value="L31"/>
    <property type="match status" value="1"/>
</dbReference>
<dbReference type="NCBIfam" id="NF000612">
    <property type="entry name" value="PRK00019.1"/>
    <property type="match status" value="1"/>
</dbReference>
<dbReference type="PANTHER" id="PTHR33280">
    <property type="entry name" value="50S RIBOSOMAL PROTEIN L31, CHLOROPLASTIC"/>
    <property type="match status" value="1"/>
</dbReference>
<dbReference type="PANTHER" id="PTHR33280:SF1">
    <property type="entry name" value="LARGE RIBOSOMAL SUBUNIT PROTEIN BL31C"/>
    <property type="match status" value="1"/>
</dbReference>
<dbReference type="Pfam" id="PF01197">
    <property type="entry name" value="Ribosomal_L31"/>
    <property type="match status" value="1"/>
</dbReference>
<dbReference type="PRINTS" id="PR01249">
    <property type="entry name" value="RIBOSOMALL31"/>
</dbReference>
<dbReference type="SUPFAM" id="SSF143800">
    <property type="entry name" value="L28p-like"/>
    <property type="match status" value="1"/>
</dbReference>